<reference key="1">
    <citation type="journal article" date="2009" name="J. Biol. Chem.">
        <title>Structural and functional characterizations of SsgB, a conserved activator of developmental cell division in morphologically complex actinomycetes.</title>
        <authorList>
            <person name="Xu Q."/>
            <person name="Traag B.A."/>
            <person name="Willemse J."/>
            <person name="McMullan D."/>
            <person name="Miller M.D."/>
            <person name="Elsliger M.A."/>
            <person name="Abdubek P."/>
            <person name="Astakhova T."/>
            <person name="Axelrod H.L."/>
            <person name="Bakolitsa C."/>
            <person name="Carlton D."/>
            <person name="Chen C."/>
            <person name="Chiu H.J."/>
            <person name="Chruszcz M."/>
            <person name="Clayton T."/>
            <person name="Das D."/>
            <person name="Deller M.C."/>
            <person name="Duan L."/>
            <person name="Ellrott K."/>
            <person name="Ernst D."/>
            <person name="Farr C.L."/>
            <person name="Feuerhelm J."/>
            <person name="Grant J.C."/>
            <person name="Grzechnik A."/>
            <person name="Grzechnik S.K."/>
            <person name="Han G.W."/>
            <person name="Jaroszewski L."/>
            <person name="Jin K.K."/>
            <person name="Klock H.E."/>
            <person name="Knuth M.W."/>
            <person name="Kozbial P."/>
            <person name="Krishna S.S."/>
            <person name="Kumar A."/>
            <person name="Marciano D."/>
            <person name="Minor W."/>
            <person name="Mommaas A.M."/>
            <person name="Morse A.T."/>
            <person name="Nigoghossian E."/>
            <person name="Nopakun A."/>
            <person name="Okach L."/>
            <person name="Oommachen S."/>
            <person name="Paulsen J."/>
            <person name="Puckett C."/>
            <person name="Reyes R."/>
            <person name="Rife C.L."/>
            <person name="Sefcovic N."/>
            <person name="Tien H.J."/>
            <person name="Trame C.B."/>
            <person name="van den Bedem H."/>
            <person name="Wang S."/>
            <person name="Weekes D."/>
            <person name="Hodgson K.O."/>
            <person name="Wooley J."/>
            <person name="Deacon A.M."/>
            <person name="Godzik A."/>
            <person name="Lesley S.A."/>
            <person name="Wilson I.A."/>
            <person name="van Wezel G.P."/>
        </authorList>
    </citation>
    <scope>NUCLEOTIDE SEQUENCE [GENOMIC DNA]</scope>
    <scope>FUNCTION</scope>
    <source>
        <strain evidence="3">DSM 45818 / CECT 9043 / HFP020203 / CcI3</strain>
    </source>
</reference>
<reference evidence="5 6" key="2">
    <citation type="journal article" date="2007" name="Genome Res.">
        <title>Genome characteristics of facultatively symbiotic Frankia sp. strains reflect host range and host plant biogeography.</title>
        <authorList>
            <person name="Normand P."/>
            <person name="Lapierre P."/>
            <person name="Tisa L.S."/>
            <person name="Gogarten J.P."/>
            <person name="Alloisio N."/>
            <person name="Bagnarol E."/>
            <person name="Bassi C.A."/>
            <person name="Berry A.M."/>
            <person name="Bickhart D.M."/>
            <person name="Choisne N."/>
            <person name="Couloux A."/>
            <person name="Cournoyer B."/>
            <person name="Cruveiller S."/>
            <person name="Daubin V."/>
            <person name="Demange N."/>
            <person name="Francino M.P."/>
            <person name="Goltsman E."/>
            <person name="Huang Y."/>
            <person name="Kopp O.R."/>
            <person name="Labarre L."/>
            <person name="Lapidus A."/>
            <person name="Lavire C."/>
            <person name="Marechal J."/>
            <person name="Martinez M."/>
            <person name="Mastronunzio J.E."/>
            <person name="Mullin B.C."/>
            <person name="Niemann J."/>
            <person name="Pujic P."/>
            <person name="Rawnsley T."/>
            <person name="Rouy Z."/>
            <person name="Schenowitz C."/>
            <person name="Sellstedt A."/>
            <person name="Tavares F."/>
            <person name="Tomkins J.P."/>
            <person name="Vallenet D."/>
            <person name="Valverde C."/>
            <person name="Wall L.G."/>
            <person name="Wang Y."/>
            <person name="Medigue C."/>
            <person name="Benson D.R."/>
        </authorList>
    </citation>
    <scope>NUCLEOTIDE SEQUENCE [LARGE SCALE GENOMIC DNA]</scope>
    <source>
        <strain evidence="5 6">DSM 45818 / CECT 9043 / HFP020203 / CcI3</strain>
    </source>
</reference>
<sequence length="145" mass="15782">MLRHSSTPAHVVARDLSVDYVTEEGEREAIPGTLRYDPADPFAVELILRPGEEAITWIFARALLAEGIEVPAGTGDVRIRPTRSKGQTVITVSLSSPSGHADLELAKSKVTAFLADCHGQVPAGRESNGIDWNNELHMLLRTRNT</sequence>
<dbReference type="EMBL" id="CP000249">
    <property type="protein sequence ID" value="ABD12772.1"/>
    <property type="molecule type" value="Genomic_DNA"/>
</dbReference>
<dbReference type="RefSeq" id="WP_011437797.1">
    <property type="nucleotide sequence ID" value="NZ_MSEA01000064.1"/>
</dbReference>
<dbReference type="SMR" id="Q2J7H0"/>
<dbReference type="STRING" id="106370.Francci3_3418"/>
<dbReference type="DNASU" id="3905658"/>
<dbReference type="KEGG" id="fra:Francci3_3418"/>
<dbReference type="eggNOG" id="ENOG5032RFA">
    <property type="taxonomic scope" value="Bacteria"/>
</dbReference>
<dbReference type="HOGENOM" id="CLU_126599_0_1_11"/>
<dbReference type="OrthoDB" id="3853096at2"/>
<dbReference type="PhylomeDB" id="Q2J7H0"/>
<dbReference type="Proteomes" id="UP000001937">
    <property type="component" value="Chromosome"/>
</dbReference>
<dbReference type="GO" id="GO:0030428">
    <property type="term" value="C:cell septum"/>
    <property type="evidence" value="ECO:0007669"/>
    <property type="project" value="UniProtKB-SubCell"/>
</dbReference>
<dbReference type="GO" id="GO:0000917">
    <property type="term" value="P:division septum assembly"/>
    <property type="evidence" value="ECO:0007669"/>
    <property type="project" value="UniProtKB-KW"/>
</dbReference>
<dbReference type="GO" id="GO:0030435">
    <property type="term" value="P:sporulation resulting in formation of a cellular spore"/>
    <property type="evidence" value="ECO:0007669"/>
    <property type="project" value="UniProtKB-KW"/>
</dbReference>
<dbReference type="Gene3D" id="2.30.31.20">
    <property type="entry name" value="Sporulation-specific cell division protein SsgB"/>
    <property type="match status" value="1"/>
</dbReference>
<dbReference type="InterPro" id="IPR006776">
    <property type="entry name" value="SsgB"/>
</dbReference>
<dbReference type="InterPro" id="IPR038658">
    <property type="entry name" value="SsgB_sf"/>
</dbReference>
<dbReference type="Pfam" id="PF04686">
    <property type="entry name" value="SsgA"/>
    <property type="match status" value="1"/>
</dbReference>
<accession>Q2J7H0</accession>
<organism evidence="5">
    <name type="scientific">Frankia casuarinae (strain DSM 45818 / CECT 9043 / HFP020203 / CcI3)</name>
    <dbReference type="NCBI Taxonomy" id="106370"/>
    <lineage>
        <taxon>Bacteria</taxon>
        <taxon>Bacillati</taxon>
        <taxon>Actinomycetota</taxon>
        <taxon>Actinomycetes</taxon>
        <taxon>Frankiales</taxon>
        <taxon>Frankiaceae</taxon>
        <taxon>Frankia</taxon>
    </lineage>
</organism>
<protein>
    <recommendedName>
        <fullName evidence="3">Sporulation-specific cell division protein Francci3_3418</fullName>
    </recommendedName>
    <alternativeName>
        <fullName evidence="3">Sporulation of Streptomyces griseus-like protein Francci3_3418</fullName>
    </alternativeName>
    <alternativeName>
        <fullName evidence="3">SsgA-like protein Francci3_3418</fullName>
        <shortName evidence="3">SALP Francci3_3418</shortName>
    </alternativeName>
</protein>
<feature type="chain" id="PRO_0000435310" description="Sporulation-specific cell division protein Francci3_3418">
    <location>
        <begin position="1"/>
        <end position="145"/>
    </location>
</feature>
<name>3418_FRACC</name>
<evidence type="ECO:0000250" key="1">
    <source>
        <dbReference type="UniProtKB" id="Q9L268"/>
    </source>
</evidence>
<evidence type="ECO:0000269" key="2">
    <source>
    </source>
</evidence>
<evidence type="ECO:0000303" key="3">
    <source>
    </source>
</evidence>
<evidence type="ECO:0000305" key="4"/>
<evidence type="ECO:0000312" key="5">
    <source>
        <dbReference type="EMBL" id="ABD12772.1"/>
    </source>
</evidence>
<evidence type="ECO:0000312" key="6">
    <source>
        <dbReference type="Proteomes" id="UP000001937"/>
    </source>
</evidence>
<proteinExistence type="inferred from homology"/>
<keyword id="KW-0131">Cell cycle</keyword>
<keyword id="KW-0132">Cell division</keyword>
<keyword id="KW-1185">Reference proteome</keyword>
<keyword id="KW-0717">Septation</keyword>
<keyword id="KW-0749">Sporulation</keyword>
<comment type="function">
    <text evidence="2">Involved in sporulation-specific cell division.</text>
</comment>
<comment type="subcellular location">
    <subcellularLocation>
        <location evidence="1">Cell septum</location>
    </subcellularLocation>
</comment>
<comment type="similarity">
    <text evidence="4">Belongs to the SsgA family.</text>
</comment>
<gene>
    <name evidence="5" type="ordered locus">Francci3_3418</name>
</gene>